<dbReference type="EC" id="6.3.4.2" evidence="1"/>
<dbReference type="EMBL" id="CR936257">
    <property type="protein sequence ID" value="CAI49075.1"/>
    <property type="molecule type" value="Genomic_DNA"/>
</dbReference>
<dbReference type="RefSeq" id="WP_011322705.1">
    <property type="nucleotide sequence ID" value="NC_007426.1"/>
</dbReference>
<dbReference type="SMR" id="Q3IS15"/>
<dbReference type="STRING" id="348780.NP_1968A"/>
<dbReference type="MEROPS" id="C26.964"/>
<dbReference type="EnsemblBacteria" id="CAI49075">
    <property type="protein sequence ID" value="CAI49075"/>
    <property type="gene ID" value="NP_1968A"/>
</dbReference>
<dbReference type="GeneID" id="3703086"/>
<dbReference type="KEGG" id="nph:NP_1968A"/>
<dbReference type="eggNOG" id="arCOG00063">
    <property type="taxonomic scope" value="Archaea"/>
</dbReference>
<dbReference type="HOGENOM" id="CLU_011675_5_0_2"/>
<dbReference type="OrthoDB" id="52769at2157"/>
<dbReference type="UniPathway" id="UPA00159">
    <property type="reaction ID" value="UER00277"/>
</dbReference>
<dbReference type="Proteomes" id="UP000002698">
    <property type="component" value="Chromosome"/>
</dbReference>
<dbReference type="GO" id="GO:0005524">
    <property type="term" value="F:ATP binding"/>
    <property type="evidence" value="ECO:0007669"/>
    <property type="project" value="UniProtKB-KW"/>
</dbReference>
<dbReference type="GO" id="GO:0003883">
    <property type="term" value="F:CTP synthase activity"/>
    <property type="evidence" value="ECO:0007669"/>
    <property type="project" value="UniProtKB-UniRule"/>
</dbReference>
<dbReference type="GO" id="GO:0004359">
    <property type="term" value="F:glutaminase activity"/>
    <property type="evidence" value="ECO:0007669"/>
    <property type="project" value="RHEA"/>
</dbReference>
<dbReference type="GO" id="GO:0042802">
    <property type="term" value="F:identical protein binding"/>
    <property type="evidence" value="ECO:0007669"/>
    <property type="project" value="TreeGrafter"/>
</dbReference>
<dbReference type="GO" id="GO:0046872">
    <property type="term" value="F:metal ion binding"/>
    <property type="evidence" value="ECO:0007669"/>
    <property type="project" value="UniProtKB-KW"/>
</dbReference>
<dbReference type="GO" id="GO:0044210">
    <property type="term" value="P:'de novo' CTP biosynthetic process"/>
    <property type="evidence" value="ECO:0007669"/>
    <property type="project" value="UniProtKB-UniRule"/>
</dbReference>
<dbReference type="GO" id="GO:0019856">
    <property type="term" value="P:pyrimidine nucleobase biosynthetic process"/>
    <property type="evidence" value="ECO:0007669"/>
    <property type="project" value="TreeGrafter"/>
</dbReference>
<dbReference type="CDD" id="cd03113">
    <property type="entry name" value="CTPS_N"/>
    <property type="match status" value="1"/>
</dbReference>
<dbReference type="CDD" id="cd01746">
    <property type="entry name" value="GATase1_CTP_Synthase"/>
    <property type="match status" value="1"/>
</dbReference>
<dbReference type="FunFam" id="3.40.50.300:FF:000009">
    <property type="entry name" value="CTP synthase"/>
    <property type="match status" value="1"/>
</dbReference>
<dbReference type="FunFam" id="3.40.50.880:FF:000002">
    <property type="entry name" value="CTP synthase"/>
    <property type="match status" value="1"/>
</dbReference>
<dbReference type="Gene3D" id="3.40.50.880">
    <property type="match status" value="1"/>
</dbReference>
<dbReference type="Gene3D" id="3.40.50.300">
    <property type="entry name" value="P-loop containing nucleotide triphosphate hydrolases"/>
    <property type="match status" value="1"/>
</dbReference>
<dbReference type="HAMAP" id="MF_01227">
    <property type="entry name" value="PyrG"/>
    <property type="match status" value="1"/>
</dbReference>
<dbReference type="InterPro" id="IPR029062">
    <property type="entry name" value="Class_I_gatase-like"/>
</dbReference>
<dbReference type="InterPro" id="IPR004468">
    <property type="entry name" value="CTP_synthase"/>
</dbReference>
<dbReference type="InterPro" id="IPR017456">
    <property type="entry name" value="CTP_synthase_N"/>
</dbReference>
<dbReference type="InterPro" id="IPR017926">
    <property type="entry name" value="GATASE"/>
</dbReference>
<dbReference type="InterPro" id="IPR033828">
    <property type="entry name" value="GATase1_CTP_Synthase"/>
</dbReference>
<dbReference type="InterPro" id="IPR027417">
    <property type="entry name" value="P-loop_NTPase"/>
</dbReference>
<dbReference type="NCBIfam" id="NF003792">
    <property type="entry name" value="PRK05380.1"/>
    <property type="match status" value="1"/>
</dbReference>
<dbReference type="NCBIfam" id="TIGR00337">
    <property type="entry name" value="PyrG"/>
    <property type="match status" value="1"/>
</dbReference>
<dbReference type="PANTHER" id="PTHR11550">
    <property type="entry name" value="CTP SYNTHASE"/>
    <property type="match status" value="1"/>
</dbReference>
<dbReference type="PANTHER" id="PTHR11550:SF0">
    <property type="entry name" value="CTP SYNTHASE-RELATED"/>
    <property type="match status" value="1"/>
</dbReference>
<dbReference type="Pfam" id="PF06418">
    <property type="entry name" value="CTP_synth_N"/>
    <property type="match status" value="1"/>
</dbReference>
<dbReference type="Pfam" id="PF00117">
    <property type="entry name" value="GATase"/>
    <property type="match status" value="1"/>
</dbReference>
<dbReference type="SUPFAM" id="SSF52317">
    <property type="entry name" value="Class I glutamine amidotransferase-like"/>
    <property type="match status" value="1"/>
</dbReference>
<dbReference type="SUPFAM" id="SSF52540">
    <property type="entry name" value="P-loop containing nucleoside triphosphate hydrolases"/>
    <property type="match status" value="1"/>
</dbReference>
<dbReference type="PROSITE" id="PS51273">
    <property type="entry name" value="GATASE_TYPE_1"/>
    <property type="match status" value="1"/>
</dbReference>
<comment type="function">
    <text evidence="1">Catalyzes the ATP-dependent amination of UTP to CTP with either L-glutamine or ammonia as the source of nitrogen. Regulates intracellular CTP levels through interactions with the four ribonucleotide triphosphates.</text>
</comment>
<comment type="catalytic activity">
    <reaction evidence="1">
        <text>UTP + L-glutamine + ATP + H2O = CTP + L-glutamate + ADP + phosphate + 2 H(+)</text>
        <dbReference type="Rhea" id="RHEA:26426"/>
        <dbReference type="ChEBI" id="CHEBI:15377"/>
        <dbReference type="ChEBI" id="CHEBI:15378"/>
        <dbReference type="ChEBI" id="CHEBI:29985"/>
        <dbReference type="ChEBI" id="CHEBI:30616"/>
        <dbReference type="ChEBI" id="CHEBI:37563"/>
        <dbReference type="ChEBI" id="CHEBI:43474"/>
        <dbReference type="ChEBI" id="CHEBI:46398"/>
        <dbReference type="ChEBI" id="CHEBI:58359"/>
        <dbReference type="ChEBI" id="CHEBI:456216"/>
        <dbReference type="EC" id="6.3.4.2"/>
    </reaction>
</comment>
<comment type="catalytic activity">
    <reaction evidence="1">
        <text>L-glutamine + H2O = L-glutamate + NH4(+)</text>
        <dbReference type="Rhea" id="RHEA:15889"/>
        <dbReference type="ChEBI" id="CHEBI:15377"/>
        <dbReference type="ChEBI" id="CHEBI:28938"/>
        <dbReference type="ChEBI" id="CHEBI:29985"/>
        <dbReference type="ChEBI" id="CHEBI:58359"/>
    </reaction>
</comment>
<comment type="catalytic activity">
    <reaction evidence="1">
        <text>UTP + NH4(+) + ATP = CTP + ADP + phosphate + 2 H(+)</text>
        <dbReference type="Rhea" id="RHEA:16597"/>
        <dbReference type="ChEBI" id="CHEBI:15378"/>
        <dbReference type="ChEBI" id="CHEBI:28938"/>
        <dbReference type="ChEBI" id="CHEBI:30616"/>
        <dbReference type="ChEBI" id="CHEBI:37563"/>
        <dbReference type="ChEBI" id="CHEBI:43474"/>
        <dbReference type="ChEBI" id="CHEBI:46398"/>
        <dbReference type="ChEBI" id="CHEBI:456216"/>
    </reaction>
</comment>
<comment type="activity regulation">
    <text evidence="1">Allosterically activated by GTP, when glutamine is the substrate; GTP has no effect on the reaction when ammonia is the substrate. The allosteric effector GTP functions by stabilizing the protein conformation that binds the tetrahedral intermediate(s) formed during glutamine hydrolysis. Inhibited by the product CTP, via allosteric rather than competitive inhibition.</text>
</comment>
<comment type="pathway">
    <text evidence="1">Pyrimidine metabolism; CTP biosynthesis via de novo pathway; CTP from UDP: step 2/2.</text>
</comment>
<comment type="subunit">
    <text evidence="1">Homotetramer.</text>
</comment>
<comment type="miscellaneous">
    <text evidence="1">CTPSs have evolved a hybrid strategy for distinguishing between UTP and CTP. The overlapping regions of the product feedback inhibitory and substrate sites recognize a common feature in both compounds, the triphosphate moiety. To differentiate isosteric substrate and product pyrimidine rings, an additional pocket far from the expected kinase/ligase catalytic site, specifically recognizes the cytosine and ribose portions of the product inhibitor.</text>
</comment>
<comment type="similarity">
    <text evidence="1">Belongs to the CTP synthase family.</text>
</comment>
<name>PYRG_NATPD</name>
<gene>
    <name evidence="1" type="primary">pyrG</name>
    <name type="ordered locus">NP_1968A</name>
</gene>
<keyword id="KW-0067">ATP-binding</keyword>
<keyword id="KW-0315">Glutamine amidotransferase</keyword>
<keyword id="KW-0436">Ligase</keyword>
<keyword id="KW-0460">Magnesium</keyword>
<keyword id="KW-0479">Metal-binding</keyword>
<keyword id="KW-0547">Nucleotide-binding</keyword>
<keyword id="KW-0665">Pyrimidine biosynthesis</keyword>
<keyword id="KW-1185">Reference proteome</keyword>
<reference key="1">
    <citation type="journal article" date="2005" name="Genome Res.">
        <title>Living with two extremes: conclusions from the genome sequence of Natronomonas pharaonis.</title>
        <authorList>
            <person name="Falb M."/>
            <person name="Pfeiffer F."/>
            <person name="Palm P."/>
            <person name="Rodewald K."/>
            <person name="Hickmann V."/>
            <person name="Tittor J."/>
            <person name="Oesterhelt D."/>
        </authorList>
    </citation>
    <scope>NUCLEOTIDE SEQUENCE [LARGE SCALE GENOMIC DNA]</scope>
    <source>
        <strain>ATCC 35678 / DSM 2160 / CIP 103997 / JCM 8858 / NBRC 14720 / NCIMB 2260 / Gabara</strain>
    </source>
</reference>
<sequence>MPTELTDYDPSMGNKFIFVTGGVMSGLGKGITAASTGRLLANAGFDVTAVKIDPYLNVDAGTMNPYQHGEVYVLKDGGEVDLDLGNYERFLDIDMTFDHNITTGKTYRHVIEKERAGDYLGKTVQIIPHVTDDIKRRIREAAEGHDVCIIEVGGTVGDIEGMPYLEALRQFAHEEDDDDILFTHVTLVPYSKNGEQKTKPTQHSVKELRSIGLQPDILVGRCEDKLDIEAKEKIALFCDVPMDAVFSNPDVEDIYHVPLMVEEEGLDQYVMEQLGLDERALPPEERANEWRDIVTQETTDEVDIALVGKYAMEDAYLSIYESLKHAGFETNTDVNVLWVDADEMDDAHADRLSRADGIIVPGGFGSRGTEGKIEAITYARENDVPFLGLCLGFQMAVVEYARNVCGLDGAHSAEIDDETDHPVIDILPEQYEVEDMGGTMRLGAHETDIEAGTLAHELYADEQCTERHRHRYEVNPEYIETLESAGLVFSGQDQNRMEILELPDHPFFFGTQFHPEFRSRPGRASPPFVGLVETILETTDTDTEEVTA</sequence>
<organism>
    <name type="scientific">Natronomonas pharaonis (strain ATCC 35678 / DSM 2160 / CIP 103997 / JCM 8858 / NBRC 14720 / NCIMB 2260 / Gabara)</name>
    <name type="common">Halobacterium pharaonis</name>
    <dbReference type="NCBI Taxonomy" id="348780"/>
    <lineage>
        <taxon>Archaea</taxon>
        <taxon>Methanobacteriati</taxon>
        <taxon>Methanobacteriota</taxon>
        <taxon>Stenosarchaea group</taxon>
        <taxon>Halobacteria</taxon>
        <taxon>Halobacteriales</taxon>
        <taxon>Haloarculaceae</taxon>
        <taxon>Natronomonas</taxon>
    </lineage>
</organism>
<proteinExistence type="inferred from homology"/>
<feature type="chain" id="PRO_0000266278" description="CTP synthase">
    <location>
        <begin position="1"/>
        <end position="548"/>
    </location>
</feature>
<feature type="domain" description="Glutamine amidotransferase type-1" evidence="1">
    <location>
        <begin position="303"/>
        <end position="541"/>
    </location>
</feature>
<feature type="region of interest" description="Amidoligase domain" evidence="1">
    <location>
        <begin position="1"/>
        <end position="276"/>
    </location>
</feature>
<feature type="active site" description="Nucleophile; for glutamine hydrolysis" evidence="1">
    <location>
        <position position="390"/>
    </location>
</feature>
<feature type="active site" evidence="1">
    <location>
        <position position="514"/>
    </location>
</feature>
<feature type="active site" evidence="1">
    <location>
        <position position="516"/>
    </location>
</feature>
<feature type="binding site" evidence="1">
    <location>
        <position position="25"/>
    </location>
    <ligand>
        <name>CTP</name>
        <dbReference type="ChEBI" id="CHEBI:37563"/>
        <note>allosteric inhibitor</note>
    </ligand>
</feature>
<feature type="binding site" evidence="1">
    <location>
        <position position="25"/>
    </location>
    <ligand>
        <name>UTP</name>
        <dbReference type="ChEBI" id="CHEBI:46398"/>
    </ligand>
</feature>
<feature type="binding site" evidence="1">
    <location>
        <begin position="26"/>
        <end position="31"/>
    </location>
    <ligand>
        <name>ATP</name>
        <dbReference type="ChEBI" id="CHEBI:30616"/>
    </ligand>
</feature>
<feature type="binding site" evidence="1">
    <location>
        <position position="66"/>
    </location>
    <ligand>
        <name>L-glutamine</name>
        <dbReference type="ChEBI" id="CHEBI:58359"/>
    </ligand>
</feature>
<feature type="binding site" evidence="1">
    <location>
        <position position="83"/>
    </location>
    <ligand>
        <name>ATP</name>
        <dbReference type="ChEBI" id="CHEBI:30616"/>
    </ligand>
</feature>
<feature type="binding site" evidence="1">
    <location>
        <position position="83"/>
    </location>
    <ligand>
        <name>Mg(2+)</name>
        <dbReference type="ChEBI" id="CHEBI:18420"/>
    </ligand>
</feature>
<feature type="binding site" evidence="1">
    <location>
        <position position="151"/>
    </location>
    <ligand>
        <name>Mg(2+)</name>
        <dbReference type="ChEBI" id="CHEBI:18420"/>
    </ligand>
</feature>
<feature type="binding site" evidence="1">
    <location>
        <begin position="158"/>
        <end position="160"/>
    </location>
    <ligand>
        <name>CTP</name>
        <dbReference type="ChEBI" id="CHEBI:37563"/>
        <note>allosteric inhibitor</note>
    </ligand>
</feature>
<feature type="binding site" evidence="1">
    <location>
        <begin position="197"/>
        <end position="202"/>
    </location>
    <ligand>
        <name>CTP</name>
        <dbReference type="ChEBI" id="CHEBI:37563"/>
        <note>allosteric inhibitor</note>
    </ligand>
</feature>
<feature type="binding site" evidence="1">
    <location>
        <begin position="197"/>
        <end position="202"/>
    </location>
    <ligand>
        <name>UTP</name>
        <dbReference type="ChEBI" id="CHEBI:46398"/>
    </ligand>
</feature>
<feature type="binding site" evidence="1">
    <location>
        <position position="233"/>
    </location>
    <ligand>
        <name>CTP</name>
        <dbReference type="ChEBI" id="CHEBI:37563"/>
        <note>allosteric inhibitor</note>
    </ligand>
</feature>
<feature type="binding site" evidence="1">
    <location>
        <position position="233"/>
    </location>
    <ligand>
        <name>UTP</name>
        <dbReference type="ChEBI" id="CHEBI:46398"/>
    </ligand>
</feature>
<feature type="binding site" evidence="1">
    <location>
        <position position="363"/>
    </location>
    <ligand>
        <name>L-glutamine</name>
        <dbReference type="ChEBI" id="CHEBI:58359"/>
    </ligand>
</feature>
<feature type="binding site" evidence="1">
    <location>
        <begin position="391"/>
        <end position="394"/>
    </location>
    <ligand>
        <name>L-glutamine</name>
        <dbReference type="ChEBI" id="CHEBI:58359"/>
    </ligand>
</feature>
<feature type="binding site" evidence="1">
    <location>
        <position position="414"/>
    </location>
    <ligand>
        <name>L-glutamine</name>
        <dbReference type="ChEBI" id="CHEBI:58359"/>
    </ligand>
</feature>
<feature type="binding site" evidence="1">
    <location>
        <position position="471"/>
    </location>
    <ligand>
        <name>L-glutamine</name>
        <dbReference type="ChEBI" id="CHEBI:58359"/>
    </ligand>
</feature>
<protein>
    <recommendedName>
        <fullName evidence="1">CTP synthase</fullName>
        <ecNumber evidence="1">6.3.4.2</ecNumber>
    </recommendedName>
    <alternativeName>
        <fullName evidence="1">Cytidine 5'-triphosphate synthase</fullName>
    </alternativeName>
    <alternativeName>
        <fullName evidence="1">Cytidine triphosphate synthetase</fullName>
        <shortName evidence="1">CTP synthetase</shortName>
        <shortName evidence="1">CTPS</shortName>
    </alternativeName>
    <alternativeName>
        <fullName evidence="1">UTP--ammonia ligase</fullName>
    </alternativeName>
</protein>
<evidence type="ECO:0000255" key="1">
    <source>
        <dbReference type="HAMAP-Rule" id="MF_01227"/>
    </source>
</evidence>
<accession>Q3IS15</accession>